<feature type="chain" id="PRO_0000226505" description="Small ribosomal subunit protein uS7">
    <location>
        <begin position="1"/>
        <end position="156"/>
    </location>
</feature>
<accession>Q5FM93</accession>
<gene>
    <name evidence="1" type="primary">rpsG</name>
    <name type="ordered locus">LBA0288</name>
</gene>
<reference key="1">
    <citation type="journal article" date="2005" name="Proc. Natl. Acad. Sci. U.S.A.">
        <title>Complete genome sequence of the probiotic lactic acid bacterium Lactobacillus acidophilus NCFM.</title>
        <authorList>
            <person name="Altermann E."/>
            <person name="Russell W.M."/>
            <person name="Azcarate-Peril M.A."/>
            <person name="Barrangou R."/>
            <person name="Buck B.L."/>
            <person name="McAuliffe O."/>
            <person name="Souther N."/>
            <person name="Dobson A."/>
            <person name="Duong T."/>
            <person name="Callanan M."/>
            <person name="Lick S."/>
            <person name="Hamrick A."/>
            <person name="Cano R."/>
            <person name="Klaenhammer T.R."/>
        </authorList>
    </citation>
    <scope>NUCLEOTIDE SEQUENCE [LARGE SCALE GENOMIC DNA]</scope>
    <source>
        <strain>ATCC 700396 / NCK56 / N2 / NCFM</strain>
    </source>
</reference>
<proteinExistence type="inferred from homology"/>
<evidence type="ECO:0000255" key="1">
    <source>
        <dbReference type="HAMAP-Rule" id="MF_00480"/>
    </source>
</evidence>
<evidence type="ECO:0000305" key="2"/>
<keyword id="KW-1185">Reference proteome</keyword>
<keyword id="KW-0687">Ribonucleoprotein</keyword>
<keyword id="KW-0689">Ribosomal protein</keyword>
<keyword id="KW-0694">RNA-binding</keyword>
<keyword id="KW-0699">rRNA-binding</keyword>
<keyword id="KW-0820">tRNA-binding</keyword>
<comment type="function">
    <text evidence="1">One of the primary rRNA binding proteins, it binds directly to 16S rRNA where it nucleates assembly of the head domain of the 30S subunit. Is located at the subunit interface close to the decoding center, probably blocks exit of the E-site tRNA.</text>
</comment>
<comment type="subunit">
    <text evidence="1">Part of the 30S ribosomal subunit. Contacts proteins S9 and S11.</text>
</comment>
<comment type="similarity">
    <text evidence="1">Belongs to the universal ribosomal protein uS7 family.</text>
</comment>
<name>RS7_LACAC</name>
<sequence>MPRKGHVTKRDVLADPVYNSKLVTKLINHLMIDGKRAKASSILYDAFNIVQDKTGKEPLDVFEEAMNNVMPVLEVRARRIGGSNYQIPVEVRPERRTTLGLRWLVSYARLRNEHTMDERLANEIIDASNNTGSAVKKREDVHRMAEANRAFAHYRF</sequence>
<dbReference type="EMBL" id="CP000033">
    <property type="protein sequence ID" value="AAV42181.1"/>
    <property type="molecule type" value="Genomic_DNA"/>
</dbReference>
<dbReference type="RefSeq" id="WP_003549021.1">
    <property type="nucleotide sequence ID" value="NC_006814.3"/>
</dbReference>
<dbReference type="RefSeq" id="YP_193212.1">
    <property type="nucleotide sequence ID" value="NC_006814.3"/>
</dbReference>
<dbReference type="SMR" id="Q5FM93"/>
<dbReference type="STRING" id="272621.LBA0288"/>
<dbReference type="GeneID" id="93290604"/>
<dbReference type="KEGG" id="lac:LBA0288"/>
<dbReference type="PATRIC" id="fig|272621.13.peg.273"/>
<dbReference type="eggNOG" id="COG0049">
    <property type="taxonomic scope" value="Bacteria"/>
</dbReference>
<dbReference type="HOGENOM" id="CLU_072226_1_1_9"/>
<dbReference type="OrthoDB" id="9807653at2"/>
<dbReference type="BioCyc" id="LACI272621:G1G49-282-MONOMER"/>
<dbReference type="Proteomes" id="UP000006381">
    <property type="component" value="Chromosome"/>
</dbReference>
<dbReference type="GO" id="GO:0015935">
    <property type="term" value="C:small ribosomal subunit"/>
    <property type="evidence" value="ECO:0007669"/>
    <property type="project" value="InterPro"/>
</dbReference>
<dbReference type="GO" id="GO:0019843">
    <property type="term" value="F:rRNA binding"/>
    <property type="evidence" value="ECO:0007669"/>
    <property type="project" value="UniProtKB-UniRule"/>
</dbReference>
<dbReference type="GO" id="GO:0003735">
    <property type="term" value="F:structural constituent of ribosome"/>
    <property type="evidence" value="ECO:0007669"/>
    <property type="project" value="InterPro"/>
</dbReference>
<dbReference type="GO" id="GO:0000049">
    <property type="term" value="F:tRNA binding"/>
    <property type="evidence" value="ECO:0007669"/>
    <property type="project" value="UniProtKB-UniRule"/>
</dbReference>
<dbReference type="GO" id="GO:0006412">
    <property type="term" value="P:translation"/>
    <property type="evidence" value="ECO:0007669"/>
    <property type="project" value="UniProtKB-UniRule"/>
</dbReference>
<dbReference type="CDD" id="cd14869">
    <property type="entry name" value="uS7_Bacteria"/>
    <property type="match status" value="1"/>
</dbReference>
<dbReference type="FunFam" id="1.10.455.10:FF:000001">
    <property type="entry name" value="30S ribosomal protein S7"/>
    <property type="match status" value="1"/>
</dbReference>
<dbReference type="Gene3D" id="1.10.455.10">
    <property type="entry name" value="Ribosomal protein S7 domain"/>
    <property type="match status" value="1"/>
</dbReference>
<dbReference type="HAMAP" id="MF_00480_B">
    <property type="entry name" value="Ribosomal_uS7_B"/>
    <property type="match status" value="1"/>
</dbReference>
<dbReference type="InterPro" id="IPR000235">
    <property type="entry name" value="Ribosomal_uS7"/>
</dbReference>
<dbReference type="InterPro" id="IPR005717">
    <property type="entry name" value="Ribosomal_uS7_bac/org-type"/>
</dbReference>
<dbReference type="InterPro" id="IPR020606">
    <property type="entry name" value="Ribosomal_uS7_CS"/>
</dbReference>
<dbReference type="InterPro" id="IPR023798">
    <property type="entry name" value="Ribosomal_uS7_dom"/>
</dbReference>
<dbReference type="InterPro" id="IPR036823">
    <property type="entry name" value="Ribosomal_uS7_dom_sf"/>
</dbReference>
<dbReference type="NCBIfam" id="TIGR01029">
    <property type="entry name" value="rpsG_bact"/>
    <property type="match status" value="1"/>
</dbReference>
<dbReference type="PANTHER" id="PTHR11205">
    <property type="entry name" value="RIBOSOMAL PROTEIN S7"/>
    <property type="match status" value="1"/>
</dbReference>
<dbReference type="Pfam" id="PF00177">
    <property type="entry name" value="Ribosomal_S7"/>
    <property type="match status" value="1"/>
</dbReference>
<dbReference type="PIRSF" id="PIRSF002122">
    <property type="entry name" value="RPS7p_RPS7a_RPS5e_RPS7o"/>
    <property type="match status" value="1"/>
</dbReference>
<dbReference type="SUPFAM" id="SSF47973">
    <property type="entry name" value="Ribosomal protein S7"/>
    <property type="match status" value="1"/>
</dbReference>
<dbReference type="PROSITE" id="PS00052">
    <property type="entry name" value="RIBOSOMAL_S7"/>
    <property type="match status" value="1"/>
</dbReference>
<organism>
    <name type="scientific">Lactobacillus acidophilus (strain ATCC 700396 / NCK56 / N2 / NCFM)</name>
    <dbReference type="NCBI Taxonomy" id="272621"/>
    <lineage>
        <taxon>Bacteria</taxon>
        <taxon>Bacillati</taxon>
        <taxon>Bacillota</taxon>
        <taxon>Bacilli</taxon>
        <taxon>Lactobacillales</taxon>
        <taxon>Lactobacillaceae</taxon>
        <taxon>Lactobacillus</taxon>
    </lineage>
</organism>
<protein>
    <recommendedName>
        <fullName evidence="1">Small ribosomal subunit protein uS7</fullName>
    </recommendedName>
    <alternativeName>
        <fullName evidence="2">30S ribosomal protein S7</fullName>
    </alternativeName>
</protein>